<accession>Q9X1S8</accession>
<keyword id="KW-1185">Reference proteome</keyword>
<keyword id="KW-0687">Ribonucleoprotein</keyword>
<keyword id="KW-0689">Ribosomal protein</keyword>
<keyword id="KW-0694">RNA-binding</keyword>
<keyword id="KW-0699">rRNA-binding</keyword>
<dbReference type="EMBL" id="AE000512">
    <property type="protein sequence ID" value="AAD36659.1"/>
    <property type="molecule type" value="Genomic_DNA"/>
</dbReference>
<dbReference type="PIR" id="D72233">
    <property type="entry name" value="D72233"/>
</dbReference>
<dbReference type="RefSeq" id="NP_229392.1">
    <property type="nucleotide sequence ID" value="NC_000853.1"/>
</dbReference>
<dbReference type="RefSeq" id="WP_004082031.1">
    <property type="nucleotide sequence ID" value="NZ_CP011107.1"/>
</dbReference>
<dbReference type="SMR" id="Q9X1S8"/>
<dbReference type="FunCoup" id="Q9X1S8">
    <property type="interactions" value="374"/>
</dbReference>
<dbReference type="STRING" id="243274.TM_1592"/>
<dbReference type="PaxDb" id="243274-THEMA_06295"/>
<dbReference type="EnsemblBacteria" id="AAD36659">
    <property type="protein sequence ID" value="AAD36659"/>
    <property type="gene ID" value="TM_1592"/>
</dbReference>
<dbReference type="KEGG" id="tma:TM1592"/>
<dbReference type="KEGG" id="tmi:THEMA_06295"/>
<dbReference type="KEGG" id="tmm:Tmari_1600"/>
<dbReference type="KEGG" id="tmw:THMA_1632"/>
<dbReference type="eggNOG" id="COG0292">
    <property type="taxonomic scope" value="Bacteria"/>
</dbReference>
<dbReference type="InParanoid" id="Q9X1S8"/>
<dbReference type="OrthoDB" id="9808966at2"/>
<dbReference type="Proteomes" id="UP000008183">
    <property type="component" value="Chromosome"/>
</dbReference>
<dbReference type="GO" id="GO:0022625">
    <property type="term" value="C:cytosolic large ribosomal subunit"/>
    <property type="evidence" value="ECO:0000318"/>
    <property type="project" value="GO_Central"/>
</dbReference>
<dbReference type="GO" id="GO:0019843">
    <property type="term" value="F:rRNA binding"/>
    <property type="evidence" value="ECO:0007669"/>
    <property type="project" value="UniProtKB-UniRule"/>
</dbReference>
<dbReference type="GO" id="GO:0003735">
    <property type="term" value="F:structural constituent of ribosome"/>
    <property type="evidence" value="ECO:0000318"/>
    <property type="project" value="GO_Central"/>
</dbReference>
<dbReference type="GO" id="GO:0000027">
    <property type="term" value="P:ribosomal large subunit assembly"/>
    <property type="evidence" value="ECO:0007669"/>
    <property type="project" value="UniProtKB-UniRule"/>
</dbReference>
<dbReference type="GO" id="GO:0006412">
    <property type="term" value="P:translation"/>
    <property type="evidence" value="ECO:0007669"/>
    <property type="project" value="InterPro"/>
</dbReference>
<dbReference type="CDD" id="cd07026">
    <property type="entry name" value="Ribosomal_L20"/>
    <property type="match status" value="1"/>
</dbReference>
<dbReference type="FunFam" id="1.10.1900.20:FF:000001">
    <property type="entry name" value="50S ribosomal protein L20"/>
    <property type="match status" value="1"/>
</dbReference>
<dbReference type="Gene3D" id="6.10.160.10">
    <property type="match status" value="1"/>
</dbReference>
<dbReference type="Gene3D" id="1.10.1900.20">
    <property type="entry name" value="Ribosomal protein L20"/>
    <property type="match status" value="1"/>
</dbReference>
<dbReference type="HAMAP" id="MF_00382">
    <property type="entry name" value="Ribosomal_bL20"/>
    <property type="match status" value="1"/>
</dbReference>
<dbReference type="InterPro" id="IPR005813">
    <property type="entry name" value="Ribosomal_bL20"/>
</dbReference>
<dbReference type="InterPro" id="IPR049946">
    <property type="entry name" value="RIBOSOMAL_L20_CS"/>
</dbReference>
<dbReference type="InterPro" id="IPR035566">
    <property type="entry name" value="Ribosomal_protein_bL20_C"/>
</dbReference>
<dbReference type="NCBIfam" id="TIGR01032">
    <property type="entry name" value="rplT_bact"/>
    <property type="match status" value="1"/>
</dbReference>
<dbReference type="PANTHER" id="PTHR10986">
    <property type="entry name" value="39S RIBOSOMAL PROTEIN L20"/>
    <property type="match status" value="1"/>
</dbReference>
<dbReference type="Pfam" id="PF00453">
    <property type="entry name" value="Ribosomal_L20"/>
    <property type="match status" value="1"/>
</dbReference>
<dbReference type="PRINTS" id="PR00062">
    <property type="entry name" value="RIBOSOMALL20"/>
</dbReference>
<dbReference type="SUPFAM" id="SSF74731">
    <property type="entry name" value="Ribosomal protein L20"/>
    <property type="match status" value="1"/>
</dbReference>
<dbReference type="PROSITE" id="PS00937">
    <property type="entry name" value="RIBOSOMAL_L20"/>
    <property type="match status" value="1"/>
</dbReference>
<name>RL20_THEMA</name>
<gene>
    <name type="primary">rplT</name>
    <name type="ordered locus">TM_1592</name>
</gene>
<protein>
    <recommendedName>
        <fullName evidence="2">Large ribosomal subunit protein bL20</fullName>
    </recommendedName>
    <alternativeName>
        <fullName>50S ribosomal protein L20</fullName>
    </alternativeName>
</protein>
<evidence type="ECO:0000250" key="1"/>
<evidence type="ECO:0000305" key="2"/>
<sequence>MRVKRAVHAKKKRKKYLKAAKGYRGALSRRYKLAKQMYVRSKWYSYVGRKQKKRDMRKLWITRINIAARNEGLKYSELIHGLKLAGVSINRKMLSELAVNDPEAFKEYVKIAKEALAS</sequence>
<organism>
    <name type="scientific">Thermotoga maritima (strain ATCC 43589 / DSM 3109 / JCM 10099 / NBRC 100826 / MSB8)</name>
    <dbReference type="NCBI Taxonomy" id="243274"/>
    <lineage>
        <taxon>Bacteria</taxon>
        <taxon>Thermotogati</taxon>
        <taxon>Thermotogota</taxon>
        <taxon>Thermotogae</taxon>
        <taxon>Thermotogales</taxon>
        <taxon>Thermotogaceae</taxon>
        <taxon>Thermotoga</taxon>
    </lineage>
</organism>
<comment type="function">
    <text evidence="1">Binds directly to 23S ribosomal RNA and is necessary for the in vitro assembly process of the 50S ribosomal subunit. It is not involved in the protein synthesizing functions of that subunit (By similarity).</text>
</comment>
<comment type="similarity">
    <text evidence="2">Belongs to the bacterial ribosomal protein bL20 family.</text>
</comment>
<proteinExistence type="inferred from homology"/>
<feature type="chain" id="PRO_0000177248" description="Large ribosomal subunit protein bL20">
    <location>
        <begin position="1"/>
        <end position="118"/>
    </location>
</feature>
<reference key="1">
    <citation type="journal article" date="1999" name="Nature">
        <title>Evidence for lateral gene transfer between Archaea and Bacteria from genome sequence of Thermotoga maritima.</title>
        <authorList>
            <person name="Nelson K.E."/>
            <person name="Clayton R.A."/>
            <person name="Gill S.R."/>
            <person name="Gwinn M.L."/>
            <person name="Dodson R.J."/>
            <person name="Haft D.H."/>
            <person name="Hickey E.K."/>
            <person name="Peterson J.D."/>
            <person name="Nelson W.C."/>
            <person name="Ketchum K.A."/>
            <person name="McDonald L.A."/>
            <person name="Utterback T.R."/>
            <person name="Malek J.A."/>
            <person name="Linher K.D."/>
            <person name="Garrett M.M."/>
            <person name="Stewart A.M."/>
            <person name="Cotton M.D."/>
            <person name="Pratt M.S."/>
            <person name="Phillips C.A."/>
            <person name="Richardson D.L."/>
            <person name="Heidelberg J.F."/>
            <person name="Sutton G.G."/>
            <person name="Fleischmann R.D."/>
            <person name="Eisen J.A."/>
            <person name="White O."/>
            <person name="Salzberg S.L."/>
            <person name="Smith H.O."/>
            <person name="Venter J.C."/>
            <person name="Fraser C.M."/>
        </authorList>
    </citation>
    <scope>NUCLEOTIDE SEQUENCE [LARGE SCALE GENOMIC DNA]</scope>
    <source>
        <strain>ATCC 43589 / DSM 3109 / JCM 10099 / NBRC 100826 / MSB8</strain>
    </source>
</reference>